<dbReference type="EMBL" id="CP001348">
    <property type="protein sequence ID" value="ACL75162.1"/>
    <property type="molecule type" value="Genomic_DNA"/>
</dbReference>
<dbReference type="RefSeq" id="WP_015924324.1">
    <property type="nucleotide sequence ID" value="NC_011898.1"/>
</dbReference>
<dbReference type="SMR" id="B8I805"/>
<dbReference type="STRING" id="394503.Ccel_0784"/>
<dbReference type="KEGG" id="cce:Ccel_0784"/>
<dbReference type="eggNOG" id="COG0099">
    <property type="taxonomic scope" value="Bacteria"/>
</dbReference>
<dbReference type="HOGENOM" id="CLU_103849_1_2_9"/>
<dbReference type="OrthoDB" id="9803610at2"/>
<dbReference type="Proteomes" id="UP000001349">
    <property type="component" value="Chromosome"/>
</dbReference>
<dbReference type="GO" id="GO:0005829">
    <property type="term" value="C:cytosol"/>
    <property type="evidence" value="ECO:0007669"/>
    <property type="project" value="TreeGrafter"/>
</dbReference>
<dbReference type="GO" id="GO:0015935">
    <property type="term" value="C:small ribosomal subunit"/>
    <property type="evidence" value="ECO:0007669"/>
    <property type="project" value="TreeGrafter"/>
</dbReference>
<dbReference type="GO" id="GO:0019843">
    <property type="term" value="F:rRNA binding"/>
    <property type="evidence" value="ECO:0007669"/>
    <property type="project" value="UniProtKB-UniRule"/>
</dbReference>
<dbReference type="GO" id="GO:0003735">
    <property type="term" value="F:structural constituent of ribosome"/>
    <property type="evidence" value="ECO:0007669"/>
    <property type="project" value="InterPro"/>
</dbReference>
<dbReference type="GO" id="GO:0000049">
    <property type="term" value="F:tRNA binding"/>
    <property type="evidence" value="ECO:0007669"/>
    <property type="project" value="UniProtKB-UniRule"/>
</dbReference>
<dbReference type="GO" id="GO:0006412">
    <property type="term" value="P:translation"/>
    <property type="evidence" value="ECO:0007669"/>
    <property type="project" value="UniProtKB-UniRule"/>
</dbReference>
<dbReference type="FunFam" id="1.10.8.50:FF:000001">
    <property type="entry name" value="30S ribosomal protein S13"/>
    <property type="match status" value="1"/>
</dbReference>
<dbReference type="FunFam" id="4.10.910.10:FF:000001">
    <property type="entry name" value="30S ribosomal protein S13"/>
    <property type="match status" value="1"/>
</dbReference>
<dbReference type="Gene3D" id="1.10.8.50">
    <property type="match status" value="1"/>
</dbReference>
<dbReference type="Gene3D" id="4.10.910.10">
    <property type="entry name" value="30s ribosomal protein s13, domain 2"/>
    <property type="match status" value="1"/>
</dbReference>
<dbReference type="HAMAP" id="MF_01315">
    <property type="entry name" value="Ribosomal_uS13"/>
    <property type="match status" value="1"/>
</dbReference>
<dbReference type="InterPro" id="IPR027437">
    <property type="entry name" value="Rbsml_uS13_C"/>
</dbReference>
<dbReference type="InterPro" id="IPR001892">
    <property type="entry name" value="Ribosomal_uS13"/>
</dbReference>
<dbReference type="InterPro" id="IPR010979">
    <property type="entry name" value="Ribosomal_uS13-like_H2TH"/>
</dbReference>
<dbReference type="InterPro" id="IPR019980">
    <property type="entry name" value="Ribosomal_uS13_bac-type"/>
</dbReference>
<dbReference type="InterPro" id="IPR018269">
    <property type="entry name" value="Ribosomal_uS13_CS"/>
</dbReference>
<dbReference type="NCBIfam" id="TIGR03631">
    <property type="entry name" value="uS13_bact"/>
    <property type="match status" value="1"/>
</dbReference>
<dbReference type="PANTHER" id="PTHR10871">
    <property type="entry name" value="30S RIBOSOMAL PROTEIN S13/40S RIBOSOMAL PROTEIN S18"/>
    <property type="match status" value="1"/>
</dbReference>
<dbReference type="PANTHER" id="PTHR10871:SF1">
    <property type="entry name" value="SMALL RIBOSOMAL SUBUNIT PROTEIN US13M"/>
    <property type="match status" value="1"/>
</dbReference>
<dbReference type="Pfam" id="PF00416">
    <property type="entry name" value="Ribosomal_S13"/>
    <property type="match status" value="1"/>
</dbReference>
<dbReference type="PIRSF" id="PIRSF002134">
    <property type="entry name" value="Ribosomal_S13"/>
    <property type="match status" value="1"/>
</dbReference>
<dbReference type="SUPFAM" id="SSF46946">
    <property type="entry name" value="S13-like H2TH domain"/>
    <property type="match status" value="1"/>
</dbReference>
<dbReference type="PROSITE" id="PS00646">
    <property type="entry name" value="RIBOSOMAL_S13_1"/>
    <property type="match status" value="1"/>
</dbReference>
<dbReference type="PROSITE" id="PS50159">
    <property type="entry name" value="RIBOSOMAL_S13_2"/>
    <property type="match status" value="1"/>
</dbReference>
<accession>B8I805</accession>
<name>RS13_RUMCH</name>
<reference key="1">
    <citation type="submission" date="2009-01" db="EMBL/GenBank/DDBJ databases">
        <title>Complete sequence of Clostridium cellulolyticum H10.</title>
        <authorList>
            <consortium name="US DOE Joint Genome Institute"/>
            <person name="Lucas S."/>
            <person name="Copeland A."/>
            <person name="Lapidus A."/>
            <person name="Glavina del Rio T."/>
            <person name="Dalin E."/>
            <person name="Tice H."/>
            <person name="Bruce D."/>
            <person name="Goodwin L."/>
            <person name="Pitluck S."/>
            <person name="Chertkov O."/>
            <person name="Saunders E."/>
            <person name="Brettin T."/>
            <person name="Detter J.C."/>
            <person name="Han C."/>
            <person name="Larimer F."/>
            <person name="Land M."/>
            <person name="Hauser L."/>
            <person name="Kyrpides N."/>
            <person name="Ivanova N."/>
            <person name="Zhou J."/>
            <person name="Richardson P."/>
        </authorList>
    </citation>
    <scope>NUCLEOTIDE SEQUENCE [LARGE SCALE GENOMIC DNA]</scope>
    <source>
        <strain>ATCC 35319 / DSM 5812 / JCM 6584 / H10</strain>
    </source>
</reference>
<keyword id="KW-1185">Reference proteome</keyword>
<keyword id="KW-0687">Ribonucleoprotein</keyword>
<keyword id="KW-0689">Ribosomal protein</keyword>
<keyword id="KW-0694">RNA-binding</keyword>
<keyword id="KW-0699">rRNA-binding</keyword>
<keyword id="KW-0820">tRNA-binding</keyword>
<sequence>MARIAGVDLPREKRVEVGLTYIYGIGRPKANEILVKTGVNPDTRVRDLTDDEVNKIREIIDKEYKVEGDLRREIALNIKRLTEIGCYRGRRHRMGLPVRGQRTKTNARTRKGPSKPVSGKKK</sequence>
<organism>
    <name type="scientific">Ruminiclostridium cellulolyticum (strain ATCC 35319 / DSM 5812 / JCM 6584 / H10)</name>
    <name type="common">Clostridium cellulolyticum</name>
    <dbReference type="NCBI Taxonomy" id="394503"/>
    <lineage>
        <taxon>Bacteria</taxon>
        <taxon>Bacillati</taxon>
        <taxon>Bacillota</taxon>
        <taxon>Clostridia</taxon>
        <taxon>Eubacteriales</taxon>
        <taxon>Oscillospiraceae</taxon>
        <taxon>Ruminiclostridium</taxon>
    </lineage>
</organism>
<proteinExistence type="inferred from homology"/>
<protein>
    <recommendedName>
        <fullName evidence="1">Small ribosomal subunit protein uS13</fullName>
    </recommendedName>
    <alternativeName>
        <fullName evidence="3">30S ribosomal protein S13</fullName>
    </alternativeName>
</protein>
<feature type="chain" id="PRO_1000165613" description="Small ribosomal subunit protein uS13">
    <location>
        <begin position="1"/>
        <end position="122"/>
    </location>
</feature>
<feature type="region of interest" description="Disordered" evidence="2">
    <location>
        <begin position="92"/>
        <end position="122"/>
    </location>
</feature>
<feature type="compositionally biased region" description="Basic residues" evidence="2">
    <location>
        <begin position="101"/>
        <end position="122"/>
    </location>
</feature>
<comment type="function">
    <text evidence="1">Located at the top of the head of the 30S subunit, it contacts several helices of the 16S rRNA. In the 70S ribosome it contacts the 23S rRNA (bridge B1a) and protein L5 of the 50S subunit (bridge B1b), connecting the 2 subunits; these bridges are implicated in subunit movement. Contacts the tRNAs in the A and P-sites.</text>
</comment>
<comment type="subunit">
    <text evidence="1">Part of the 30S ribosomal subunit. Forms a loose heterodimer with protein S19. Forms two bridges to the 50S subunit in the 70S ribosome.</text>
</comment>
<comment type="similarity">
    <text evidence="1">Belongs to the universal ribosomal protein uS13 family.</text>
</comment>
<evidence type="ECO:0000255" key="1">
    <source>
        <dbReference type="HAMAP-Rule" id="MF_01315"/>
    </source>
</evidence>
<evidence type="ECO:0000256" key="2">
    <source>
        <dbReference type="SAM" id="MobiDB-lite"/>
    </source>
</evidence>
<evidence type="ECO:0000305" key="3"/>
<gene>
    <name evidence="1" type="primary">rpsM</name>
    <name type="ordered locus">Ccel_0784</name>
</gene>